<organism>
    <name type="scientific">Homo sapiens</name>
    <name type="common">Human</name>
    <dbReference type="NCBI Taxonomy" id="9606"/>
    <lineage>
        <taxon>Eukaryota</taxon>
        <taxon>Metazoa</taxon>
        <taxon>Chordata</taxon>
        <taxon>Craniata</taxon>
        <taxon>Vertebrata</taxon>
        <taxon>Euteleostomi</taxon>
        <taxon>Mammalia</taxon>
        <taxon>Eutheria</taxon>
        <taxon>Euarchontoglires</taxon>
        <taxon>Primates</taxon>
        <taxon>Haplorrhini</taxon>
        <taxon>Catarrhini</taxon>
        <taxon>Hominidae</taxon>
        <taxon>Homo</taxon>
    </lineage>
</organism>
<accession>P21926</accession>
<accession>D3DUQ9</accession>
<accession>Q5J7W6</accession>
<accession>Q96ES4</accession>
<comment type="function">
    <text evidence="1 6 8 11 17 18">Integral membrane protein associated with integrins, which regulates different processes, such as sperm-egg fusion, platelet activation and aggregation, and cell adhesion (PubMed:14575715, PubMed:18541721, PubMed:8478605). Present at the cell surface of oocytes and plays a key role in sperm-egg fusion, possibly by organizing multiprotein complexes and the morphology of the membrane required for the fusion (By similarity). In myoblasts, associates with CD81 and PTGFRN and inhibits myotube fusion during muscle regeneration (By similarity). In macrophages, associates with CD81 and beta-1 and beta-2 integrins, and prevents macrophage fusion into multinucleated giant cells specialized in ingesting complement-opsonized large particles (PubMed:12796480). Also prevents the fusion between mononuclear cell progenitors into osteoclasts in charge of bone resorption (By similarity). Acts as a receptor for PSG17 (By similarity). Involved in platelet activation and aggregation (PubMed:18541721). Regulates paranodal junction formation (By similarity). Involved in cell adhesion, cell motility and tumor metastasis (PubMed:7511626, PubMed:8478605).</text>
</comment>
<comment type="subunit">
    <text evidence="1 3 4 6 7 11 12 14 16">Forms both disulfide-linked homodimers and higher homooligomers as well as heterooligomers with other members of the tetraspanin family (PubMed:14556650). Interacts (via the second extracellular domain) with integrin ITGAV:ITGB3 (PubMed:19640571, PubMed:27993971). Interacts with integrin ITGA6:ITGB1; interaction takes place in oocytes and is involved in sperm-egg fusion (By similarity). Part of integrin-tetraspanin complexes composed of CD81, beta-1 and beta-2 integrins in the membrane of monocyte/macrophages (PubMed:12796480). Interacts with CD63; identified in a complex with CD63 and ITGB3 (PubMed:19640571). Associates with CR2/CD21 and with PTGFRN/CD9P1 (PubMed:11278880). Part of a complex composed of CD9, CD81, PTGFRN and IGSF8 (By similarity). Interacts directly with IGSF8 (PubMed:11504738). Interacts with PDPN; this interaction is homophilic and attenuates platelet aggregation and pulmonary metastasis induced by PDPN (PubMed:18541721). Interacts (on T cell side) with CD81 at immunological synapses between antigen-presenting cells and T cells (PubMed:23858057).</text>
</comment>
<comment type="interaction">
    <interactant intactId="EBI-4280101">
        <id>P21926</id>
    </interactant>
    <interactant intactId="EBI-1536151">
        <id>O14672</id>
        <label>ADAM10</label>
    </interactant>
    <organismsDiffer>false</organismsDiffer>
    <experiments>17</experiments>
</comment>
<comment type="interaction">
    <interactant intactId="EBI-4280101">
        <id>P21926</id>
    </interactant>
    <interactant intactId="EBI-353759">
        <id>P08473</id>
        <label>MME</label>
    </interactant>
    <organismsDiffer>false</organismsDiffer>
    <experiments>6</experiments>
</comment>
<comment type="interaction">
    <interactant intactId="EBI-4280101">
        <id>P21926</id>
    </interactant>
    <interactant intactId="EBI-12382569">
        <id>Q2M2E3</id>
        <label>ODF4</label>
    </interactant>
    <organismsDiffer>false</organismsDiffer>
    <experiments>3</experiments>
</comment>
<comment type="interaction">
    <interactant intactId="EBI-4280101">
        <id>P21926</id>
    </interactant>
    <interactant intactId="EBI-4290465">
        <id>Q9P2B2</id>
        <label>PTGFRN</label>
    </interactant>
    <organismsDiffer>false</organismsDiffer>
    <experiments>11</experiments>
</comment>
<comment type="subcellular location">
    <subcellularLocation>
        <location evidence="12">Cell membrane</location>
        <topology evidence="12">Multi-pass membrane protein</topology>
    </subcellularLocation>
    <subcellularLocation>
        <location evidence="12">Membrane</location>
        <topology evidence="12">Multi-pass membrane protein</topology>
    </subcellularLocation>
    <subcellularLocation>
        <location evidence="1">Secreted</location>
        <location evidence="1">Extracellular exosome</location>
    </subcellularLocation>
    <text evidence="1">Present at the cell surface of oocytes. Accumulates in the adhesion area between the sperm and egg following interaction between IZUMO1 and its receptor IZUMO1R/JUNO.</text>
</comment>
<comment type="tissue specificity">
    <text evidence="12">Detected in platelets (at protein level) (PubMed:19640571). Expressed by a variety of hematopoietic and epithelial cells (PubMed:19640571).</text>
</comment>
<comment type="PTM">
    <text evidence="5 10">Palmitoylated at a low, basal level in unstimulated platelets. The level of palmitoylation increases when platelets are activated by thrombin (in vitro). The protein exists in three forms with molecular masses between 22 and 27 kDa, and is known to carry covalently linked fatty acids (PubMed:11959120). Palmitoylation by ZDHHC2 regulates CD9 expression, association with other tetraspanin family proteins and function in cell adhesion (PubMed:18508921).</text>
</comment>
<comment type="similarity">
    <text evidence="23">Belongs to the tetraspanin (TM4SF) family.</text>
</comment>
<comment type="online information" name="Atlas of Genetics and Cytogenetics in Oncology and Haematology">
    <link uri="https://atlasgeneticsoncology.org/gene/995/CD9"/>
</comment>
<keyword id="KW-0002">3D-structure</keyword>
<keyword id="KW-0130">Cell adhesion</keyword>
<keyword id="KW-1003">Cell membrane</keyword>
<keyword id="KW-0903">Direct protein sequencing</keyword>
<keyword id="KW-1015">Disulfide bond</keyword>
<keyword id="KW-0278">Fertilization</keyword>
<keyword id="KW-0325">Glycoprotein</keyword>
<keyword id="KW-0449">Lipoprotein</keyword>
<keyword id="KW-0472">Membrane</keyword>
<keyword id="KW-0564">Palmitate</keyword>
<keyword id="KW-1267">Proteomics identification</keyword>
<keyword id="KW-1185">Reference proteome</keyword>
<keyword id="KW-0964">Secreted</keyword>
<keyword id="KW-0812">Transmembrane</keyword>
<keyword id="KW-1133">Transmembrane helix</keyword>
<dbReference type="EMBL" id="M38690">
    <property type="protein sequence ID" value="AAA80320.1"/>
    <property type="molecule type" value="mRNA"/>
</dbReference>
<dbReference type="EMBL" id="L34068">
    <property type="protein sequence ID" value="AAA59982.1"/>
    <property type="molecule type" value="mRNA"/>
</dbReference>
<dbReference type="EMBL" id="X60111">
    <property type="protein sequence ID" value="CAA42708.1"/>
    <property type="molecule type" value="mRNA"/>
</dbReference>
<dbReference type="EMBL" id="S60489">
    <property type="protein sequence ID" value="AAC60586.1"/>
    <property type="molecule type" value="Genomic_DNA"/>
</dbReference>
<dbReference type="EMBL" id="S60462">
    <property type="protein sequence ID" value="AAC60586.1"/>
    <property type="status" value="JOINED"/>
    <property type="molecule type" value="Genomic_DNA"/>
</dbReference>
<dbReference type="EMBL" id="S60463">
    <property type="protein sequence ID" value="AAC60586.1"/>
    <property type="status" value="JOINED"/>
    <property type="molecule type" value="Genomic_DNA"/>
</dbReference>
<dbReference type="EMBL" id="S60464">
    <property type="protein sequence ID" value="AAC60586.1"/>
    <property type="status" value="JOINED"/>
    <property type="molecule type" value="Genomic_DNA"/>
</dbReference>
<dbReference type="EMBL" id="S60700">
    <property type="protein sequence ID" value="AAC60586.1"/>
    <property type="status" value="JOINED"/>
    <property type="molecule type" value="Genomic_DNA"/>
</dbReference>
<dbReference type="EMBL" id="S60699">
    <property type="protein sequence ID" value="AAC60586.1"/>
    <property type="status" value="JOINED"/>
    <property type="molecule type" value="Genomic_DNA"/>
</dbReference>
<dbReference type="EMBL" id="S60465">
    <property type="protein sequence ID" value="AAC60586.1"/>
    <property type="status" value="JOINED"/>
    <property type="molecule type" value="Genomic_DNA"/>
</dbReference>
<dbReference type="EMBL" id="S60472">
    <property type="protein sequence ID" value="AAC60586.1"/>
    <property type="status" value="JOINED"/>
    <property type="molecule type" value="Genomic_DNA"/>
</dbReference>
<dbReference type="EMBL" id="L08118">
    <property type="status" value="NOT_ANNOTATED_CDS"/>
    <property type="molecule type" value="Genomic_DNA"/>
</dbReference>
<dbReference type="EMBL" id="L08119">
    <property type="protein sequence ID" value="AAA51954.1"/>
    <property type="status" value="ALT_SEQ"/>
    <property type="molecule type" value="Genomic_DNA"/>
</dbReference>
<dbReference type="EMBL" id="L08120">
    <property type="protein sequence ID" value="AAA51955.1"/>
    <property type="status" value="ALT_SEQ"/>
    <property type="molecule type" value="Genomic_DNA"/>
</dbReference>
<dbReference type="EMBL" id="L08121">
    <property type="protein sequence ID" value="AAA51956.1"/>
    <property type="molecule type" value="Genomic_DNA"/>
</dbReference>
<dbReference type="EMBL" id="L08122">
    <property type="protein sequence ID" value="AAA51957.1"/>
    <property type="molecule type" value="Genomic_DNA"/>
</dbReference>
<dbReference type="EMBL" id="L08123">
    <property type="protein sequence ID" value="AAA51958.1"/>
    <property type="molecule type" value="Genomic_DNA"/>
</dbReference>
<dbReference type="EMBL" id="L08124">
    <property type="protein sequence ID" value="AAA51959.1"/>
    <property type="molecule type" value="Genomic_DNA"/>
</dbReference>
<dbReference type="EMBL" id="L08125">
    <property type="status" value="NOT_ANNOTATED_CDS"/>
    <property type="molecule type" value="Genomic_DNA"/>
</dbReference>
<dbReference type="EMBL" id="AB079244">
    <property type="protein sequence ID" value="BAE71132.1"/>
    <property type="molecule type" value="mRNA"/>
</dbReference>
<dbReference type="EMBL" id="AY423720">
    <property type="protein sequence ID" value="AAS00483.1"/>
    <property type="molecule type" value="mRNA"/>
</dbReference>
<dbReference type="EMBL" id="AY422198">
    <property type="protein sequence ID" value="AAQ87878.1"/>
    <property type="molecule type" value="Genomic_DNA"/>
</dbReference>
<dbReference type="EMBL" id="CH471116">
    <property type="protein sequence ID" value="EAW88812.1"/>
    <property type="molecule type" value="Genomic_DNA"/>
</dbReference>
<dbReference type="EMBL" id="CH471116">
    <property type="protein sequence ID" value="EAW88813.1"/>
    <property type="molecule type" value="Genomic_DNA"/>
</dbReference>
<dbReference type="EMBL" id="BC011988">
    <property type="protein sequence ID" value="AAH11988.1"/>
    <property type="molecule type" value="mRNA"/>
</dbReference>
<dbReference type="CCDS" id="CCDS8540.1"/>
<dbReference type="PIR" id="A46123">
    <property type="entry name" value="A40402"/>
</dbReference>
<dbReference type="RefSeq" id="NP_001317241.1">
    <property type="nucleotide sequence ID" value="NM_001330312.1"/>
</dbReference>
<dbReference type="RefSeq" id="NP_001400172.1">
    <property type="nucleotide sequence ID" value="NM_001413243.1"/>
</dbReference>
<dbReference type="RefSeq" id="NP_001760.1">
    <property type="nucleotide sequence ID" value="NM_001769.4"/>
</dbReference>
<dbReference type="PDB" id="6K4J">
    <property type="method" value="X-ray"/>
    <property type="resolution" value="2.70 A"/>
    <property type="chains" value="A=1-228"/>
</dbReference>
<dbReference type="PDB" id="6RLO">
    <property type="method" value="X-ray"/>
    <property type="resolution" value="2.20 A"/>
    <property type="chains" value="I/J/K/L=114-191"/>
</dbReference>
<dbReference type="PDB" id="6RLR">
    <property type="method" value="X-ray"/>
    <property type="resolution" value="2.00 A"/>
    <property type="chains" value="A/B/C/D=114-191"/>
</dbReference>
<dbReference type="PDB" id="6Z1V">
    <property type="method" value="X-ray"/>
    <property type="resolution" value="1.33 A"/>
    <property type="chains" value="A=114-191"/>
</dbReference>
<dbReference type="PDB" id="6Z20">
    <property type="method" value="X-ray"/>
    <property type="resolution" value="2.68 A"/>
    <property type="chains" value="A/C=114-191"/>
</dbReference>
<dbReference type="PDBsum" id="6K4J"/>
<dbReference type="PDBsum" id="6RLO"/>
<dbReference type="PDBsum" id="6RLR"/>
<dbReference type="PDBsum" id="6Z1V"/>
<dbReference type="PDBsum" id="6Z20"/>
<dbReference type="SMR" id="P21926"/>
<dbReference type="BioGRID" id="107366">
    <property type="interactions" value="93"/>
</dbReference>
<dbReference type="CORUM" id="P21926"/>
<dbReference type="DIP" id="DIP-1122N"/>
<dbReference type="FunCoup" id="P21926">
    <property type="interactions" value="327"/>
</dbReference>
<dbReference type="IntAct" id="P21926">
    <property type="interactions" value="100"/>
</dbReference>
<dbReference type="MINT" id="P21926"/>
<dbReference type="STRING" id="9606.ENSP00000371958"/>
<dbReference type="DrugBank" id="DB05398">
    <property type="generic name" value="C31G"/>
</dbReference>
<dbReference type="TCDB" id="8.A.40.1.9">
    <property type="family name" value="the tetraspanin (tetraspanin) family"/>
</dbReference>
<dbReference type="GlyCosmos" id="P21926">
    <property type="glycosylation" value="2 sites, No reported glycans"/>
</dbReference>
<dbReference type="GlyGen" id="P21926">
    <property type="glycosylation" value="4 sites, 1 O-linked glycan (1 site)"/>
</dbReference>
<dbReference type="iPTMnet" id="P21926"/>
<dbReference type="PhosphoSitePlus" id="P21926"/>
<dbReference type="SwissPalm" id="P21926"/>
<dbReference type="BioMuta" id="CD9"/>
<dbReference type="DMDM" id="231724"/>
<dbReference type="jPOST" id="P21926"/>
<dbReference type="MassIVE" id="P21926"/>
<dbReference type="PaxDb" id="9606-ENSP00000371958"/>
<dbReference type="PeptideAtlas" id="P21926"/>
<dbReference type="PRIDE" id="P21926"/>
<dbReference type="ProteomicsDB" id="53942"/>
<dbReference type="Pumba" id="P21926"/>
<dbReference type="Antibodypedia" id="3733">
    <property type="antibodies" value="1868 antibodies from 49 providers"/>
</dbReference>
<dbReference type="DNASU" id="928"/>
<dbReference type="Ensembl" id="ENST00000009180.10">
    <property type="protein sequence ID" value="ENSP00000009180.4"/>
    <property type="gene ID" value="ENSG00000010278.15"/>
</dbReference>
<dbReference type="Ensembl" id="ENST00000382518.6">
    <property type="protein sequence ID" value="ENSP00000371958.1"/>
    <property type="gene ID" value="ENSG00000010278.15"/>
</dbReference>
<dbReference type="Ensembl" id="ENST00000538834.6">
    <property type="protein sequence ID" value="ENSP00000496639.1"/>
    <property type="gene ID" value="ENSG00000010278.15"/>
</dbReference>
<dbReference type="GeneID" id="928"/>
<dbReference type="KEGG" id="hsa:928"/>
<dbReference type="MANE-Select" id="ENST00000009180.10">
    <property type="protein sequence ID" value="ENSP00000009180.4"/>
    <property type="RefSeq nucleotide sequence ID" value="NM_001769.4"/>
    <property type="RefSeq protein sequence ID" value="NP_001760.1"/>
</dbReference>
<dbReference type="UCSC" id="uc001qnq.3">
    <property type="organism name" value="human"/>
</dbReference>
<dbReference type="AGR" id="HGNC:1709"/>
<dbReference type="CTD" id="928"/>
<dbReference type="DisGeNET" id="928"/>
<dbReference type="GeneCards" id="CD9"/>
<dbReference type="HGNC" id="HGNC:1709">
    <property type="gene designation" value="CD9"/>
</dbReference>
<dbReference type="HPA" id="ENSG00000010278">
    <property type="expression patterns" value="Low tissue specificity"/>
</dbReference>
<dbReference type="MIM" id="143030">
    <property type="type" value="gene"/>
</dbReference>
<dbReference type="neXtProt" id="NX_P21926"/>
<dbReference type="OpenTargets" id="ENSG00000010278"/>
<dbReference type="PharmGKB" id="PA26247"/>
<dbReference type="VEuPathDB" id="HostDB:ENSG00000010278"/>
<dbReference type="eggNOG" id="KOG3882">
    <property type="taxonomic scope" value="Eukaryota"/>
</dbReference>
<dbReference type="GeneTree" id="ENSGT00940000155083"/>
<dbReference type="HOGENOM" id="CLU_055524_10_1_1"/>
<dbReference type="InParanoid" id="P21926"/>
<dbReference type="OMA" id="MVKDEYG"/>
<dbReference type="OrthoDB" id="5870230at2759"/>
<dbReference type="PAN-GO" id="P21926">
    <property type="GO annotations" value="1 GO annotation based on evolutionary models"/>
</dbReference>
<dbReference type="PhylomeDB" id="P21926"/>
<dbReference type="TreeFam" id="TF352895"/>
<dbReference type="PathwayCommons" id="P21926"/>
<dbReference type="Reactome" id="R-HSA-114608">
    <property type="pathway name" value="Platelet degranulation"/>
</dbReference>
<dbReference type="Reactome" id="R-HSA-1300645">
    <property type="pathway name" value="Acrosome Reaction and Sperm:Oocyte Membrane Binding"/>
</dbReference>
<dbReference type="Reactome" id="R-HSA-5336415">
    <property type="pathway name" value="Uptake and function of diphtheria toxin"/>
</dbReference>
<dbReference type="SignaLink" id="P21926"/>
<dbReference type="BioGRID-ORCS" id="928">
    <property type="hits" value="40 hits in 1154 CRISPR screens"/>
</dbReference>
<dbReference type="CD-CODE" id="FB4E32DD">
    <property type="entry name" value="Presynaptic clusters and postsynaptic densities"/>
</dbReference>
<dbReference type="ChiTaRS" id="CD9">
    <property type="organism name" value="human"/>
</dbReference>
<dbReference type="GeneWiki" id="CD9"/>
<dbReference type="GenomeRNAi" id="928"/>
<dbReference type="Pharos" id="P21926">
    <property type="development level" value="Tbio"/>
</dbReference>
<dbReference type="PRO" id="PR:P21926"/>
<dbReference type="Proteomes" id="UP000005640">
    <property type="component" value="Chromosome 12"/>
</dbReference>
<dbReference type="RNAct" id="P21926">
    <property type="molecule type" value="protein"/>
</dbReference>
<dbReference type="Bgee" id="ENSG00000010278">
    <property type="expression patterns" value="Expressed in pharyngeal mucosa and 204 other cell types or tissues"/>
</dbReference>
<dbReference type="ExpressionAtlas" id="P21926">
    <property type="expression patterns" value="baseline and differential"/>
</dbReference>
<dbReference type="GO" id="GO:0016324">
    <property type="term" value="C:apical plasma membrane"/>
    <property type="evidence" value="ECO:0007669"/>
    <property type="project" value="Ensembl"/>
</dbReference>
<dbReference type="GO" id="GO:0030669">
    <property type="term" value="C:clathrin-coated endocytic vesicle membrane"/>
    <property type="evidence" value="ECO:0000304"/>
    <property type="project" value="Reactome"/>
</dbReference>
<dbReference type="GO" id="GO:0030666">
    <property type="term" value="C:endocytic vesicle membrane"/>
    <property type="evidence" value="ECO:0000304"/>
    <property type="project" value="Reactome"/>
</dbReference>
<dbReference type="GO" id="GO:0009897">
    <property type="term" value="C:external side of plasma membrane"/>
    <property type="evidence" value="ECO:0007669"/>
    <property type="project" value="Ensembl"/>
</dbReference>
<dbReference type="GO" id="GO:0070062">
    <property type="term" value="C:extracellular exosome"/>
    <property type="evidence" value="ECO:0000314"/>
    <property type="project" value="UniProtKB"/>
</dbReference>
<dbReference type="GO" id="GO:0005615">
    <property type="term" value="C:extracellular space"/>
    <property type="evidence" value="ECO:0007005"/>
    <property type="project" value="UniProtKB"/>
</dbReference>
<dbReference type="GO" id="GO:1903561">
    <property type="term" value="C:extracellular vesicle"/>
    <property type="evidence" value="ECO:0007005"/>
    <property type="project" value="UniProtKB"/>
</dbReference>
<dbReference type="GO" id="GO:0005925">
    <property type="term" value="C:focal adhesion"/>
    <property type="evidence" value="ECO:0007005"/>
    <property type="project" value="UniProtKB"/>
</dbReference>
<dbReference type="GO" id="GO:0016020">
    <property type="term" value="C:membrane"/>
    <property type="evidence" value="ECO:0000250"/>
    <property type="project" value="UniProtKB"/>
</dbReference>
<dbReference type="GO" id="GO:0005886">
    <property type="term" value="C:plasma membrane"/>
    <property type="evidence" value="ECO:0000250"/>
    <property type="project" value="UniProtKB"/>
</dbReference>
<dbReference type="GO" id="GO:0031092">
    <property type="term" value="C:platelet alpha granule membrane"/>
    <property type="evidence" value="ECO:0000304"/>
    <property type="project" value="Reactome"/>
</dbReference>
<dbReference type="GO" id="GO:0032991">
    <property type="term" value="C:protein-containing complex"/>
    <property type="evidence" value="ECO:0000314"/>
    <property type="project" value="ARUK-UCL"/>
</dbReference>
<dbReference type="GO" id="GO:0005178">
    <property type="term" value="F:integrin binding"/>
    <property type="evidence" value="ECO:0000314"/>
    <property type="project" value="UniProtKB"/>
</dbReference>
<dbReference type="GO" id="GO:0007155">
    <property type="term" value="P:cell adhesion"/>
    <property type="evidence" value="ECO:0000314"/>
    <property type="project" value="UniProtKB"/>
</dbReference>
<dbReference type="GO" id="GO:0008283">
    <property type="term" value="P:cell population proliferation"/>
    <property type="evidence" value="ECO:0007669"/>
    <property type="project" value="Ensembl"/>
</dbReference>
<dbReference type="GO" id="GO:0071404">
    <property type="term" value="P:cellular response to low-density lipoprotein particle stimulus"/>
    <property type="evidence" value="ECO:0000250"/>
    <property type="project" value="UniProtKB"/>
</dbReference>
<dbReference type="GO" id="GO:0007342">
    <property type="term" value="P:fusion of sperm to egg plasma membrane involved in single fertilization"/>
    <property type="evidence" value="ECO:0000314"/>
    <property type="project" value="UniProtKB"/>
</dbReference>
<dbReference type="GO" id="GO:0008347">
    <property type="term" value="P:glial cell migration"/>
    <property type="evidence" value="ECO:0000315"/>
    <property type="project" value="FlyBase"/>
</dbReference>
<dbReference type="GO" id="GO:0014905">
    <property type="term" value="P:myoblast fusion involved in skeletal muscle regeneration"/>
    <property type="evidence" value="ECO:0000250"/>
    <property type="project" value="UniProtKB"/>
</dbReference>
<dbReference type="GO" id="GO:0008285">
    <property type="term" value="P:negative regulation of cell population proliferation"/>
    <property type="evidence" value="ECO:0007669"/>
    <property type="project" value="Ensembl"/>
</dbReference>
<dbReference type="GO" id="GO:0090331">
    <property type="term" value="P:negative regulation of platelet aggregation"/>
    <property type="evidence" value="ECO:0000314"/>
    <property type="project" value="UniProtKB"/>
</dbReference>
<dbReference type="GO" id="GO:0014003">
    <property type="term" value="P:oligodendrocyte development"/>
    <property type="evidence" value="ECO:0007669"/>
    <property type="project" value="Ensembl"/>
</dbReference>
<dbReference type="GO" id="GO:0030913">
    <property type="term" value="P:paranodal junction assembly"/>
    <property type="evidence" value="ECO:0000250"/>
    <property type="project" value="UniProtKB"/>
</dbReference>
<dbReference type="GO" id="GO:0030168">
    <property type="term" value="P:platelet activation"/>
    <property type="evidence" value="ECO:0000303"/>
    <property type="project" value="UniProtKB"/>
</dbReference>
<dbReference type="GO" id="GO:0031623">
    <property type="term" value="P:receptor internalization"/>
    <property type="evidence" value="ECO:0000250"/>
    <property type="project" value="UniProtKB"/>
</dbReference>
<dbReference type="GO" id="GO:1905521">
    <property type="term" value="P:regulation of macrophage migration"/>
    <property type="evidence" value="ECO:0007669"/>
    <property type="project" value="Ensembl"/>
</dbReference>
<dbReference type="GO" id="GO:0035036">
    <property type="term" value="P:sperm-egg recognition"/>
    <property type="evidence" value="ECO:0000250"/>
    <property type="project" value="UniProtKB"/>
</dbReference>
<dbReference type="CDD" id="cd03152">
    <property type="entry name" value="CD9_LEL"/>
    <property type="match status" value="1"/>
</dbReference>
<dbReference type="FunFam" id="1.10.1450.10:FF:000016">
    <property type="entry name" value="Tetraspanin"/>
    <property type="match status" value="1"/>
</dbReference>
<dbReference type="Gene3D" id="1.10.1450.10">
    <property type="entry name" value="Tetraspanin"/>
    <property type="match status" value="1"/>
</dbReference>
<dbReference type="InterPro" id="IPR042055">
    <property type="entry name" value="CD9_LEL"/>
</dbReference>
<dbReference type="InterPro" id="IPR018499">
    <property type="entry name" value="Tetraspanin/Peripherin"/>
</dbReference>
<dbReference type="InterPro" id="IPR000301">
    <property type="entry name" value="Tetraspanin_animals"/>
</dbReference>
<dbReference type="InterPro" id="IPR018503">
    <property type="entry name" value="Tetraspanin_CS"/>
</dbReference>
<dbReference type="InterPro" id="IPR008952">
    <property type="entry name" value="Tetraspanin_EC2_sf"/>
</dbReference>
<dbReference type="PANTHER" id="PTHR19282:SF163">
    <property type="entry name" value="CD9 ANTIGEN"/>
    <property type="match status" value="1"/>
</dbReference>
<dbReference type="PANTHER" id="PTHR19282">
    <property type="entry name" value="TETRASPANIN"/>
    <property type="match status" value="1"/>
</dbReference>
<dbReference type="Pfam" id="PF00335">
    <property type="entry name" value="Tetraspanin"/>
    <property type="match status" value="1"/>
</dbReference>
<dbReference type="PIRSF" id="PIRSF002419">
    <property type="entry name" value="Tetraspanin"/>
    <property type="match status" value="1"/>
</dbReference>
<dbReference type="PRINTS" id="PR00259">
    <property type="entry name" value="TMFOUR"/>
</dbReference>
<dbReference type="SUPFAM" id="SSF48652">
    <property type="entry name" value="Tetraspanin"/>
    <property type="match status" value="1"/>
</dbReference>
<dbReference type="PROSITE" id="PS00421">
    <property type="entry name" value="TM4_1"/>
    <property type="match status" value="1"/>
</dbReference>
<protein>
    <recommendedName>
        <fullName evidence="19">CD9 antigen</fullName>
    </recommendedName>
    <alternativeName>
        <fullName>5H9 antigen</fullName>
    </alternativeName>
    <alternativeName>
        <fullName evidence="22">Cell growth-inhibiting gene 2 protein</fullName>
    </alternativeName>
    <alternativeName>
        <fullName>Leukocyte antigen MIC3</fullName>
    </alternativeName>
    <alternativeName>
        <fullName evidence="21">Motility-related protein</fullName>
        <shortName evidence="21">MRP-1</shortName>
    </alternativeName>
    <alternativeName>
        <fullName>Tetraspanin-29</fullName>
        <shortName>Tspan-29</shortName>
    </alternativeName>
    <alternativeName>
        <fullName evidence="20">p24</fullName>
    </alternativeName>
    <cdAntigenName evidence="19">CD9</cdAntigenName>
</protein>
<proteinExistence type="evidence at protein level"/>
<evidence type="ECO:0000250" key="1">
    <source>
        <dbReference type="UniProtKB" id="P40240"/>
    </source>
</evidence>
<evidence type="ECO:0000255" key="2"/>
<evidence type="ECO:0000269" key="3">
    <source>
    </source>
</evidence>
<evidence type="ECO:0000269" key="4">
    <source>
    </source>
</evidence>
<evidence type="ECO:0000269" key="5">
    <source>
    </source>
</evidence>
<evidence type="ECO:0000269" key="6">
    <source>
    </source>
</evidence>
<evidence type="ECO:0000269" key="7">
    <source>
    </source>
</evidence>
<evidence type="ECO:0000269" key="8">
    <source>
    </source>
</evidence>
<evidence type="ECO:0000269" key="9">
    <source>
    </source>
</evidence>
<evidence type="ECO:0000269" key="10">
    <source>
    </source>
</evidence>
<evidence type="ECO:0000269" key="11">
    <source>
    </source>
</evidence>
<evidence type="ECO:0000269" key="12">
    <source>
    </source>
</evidence>
<evidence type="ECO:0000269" key="13">
    <source>
    </source>
</evidence>
<evidence type="ECO:0000269" key="14">
    <source>
    </source>
</evidence>
<evidence type="ECO:0000269" key="15">
    <source>
    </source>
</evidence>
<evidence type="ECO:0000269" key="16">
    <source>
    </source>
</evidence>
<evidence type="ECO:0000269" key="17">
    <source>
    </source>
</evidence>
<evidence type="ECO:0000269" key="18">
    <source>
    </source>
</evidence>
<evidence type="ECO:0000303" key="19">
    <source>
    </source>
</evidence>
<evidence type="ECO:0000303" key="20">
    <source>
    </source>
</evidence>
<evidence type="ECO:0000303" key="21">
    <source>
    </source>
</evidence>
<evidence type="ECO:0000303" key="22">
    <source ref="6"/>
</evidence>
<evidence type="ECO:0000305" key="23"/>
<evidence type="ECO:0000305" key="24">
    <source>
    </source>
</evidence>
<evidence type="ECO:0000312" key="25">
    <source>
        <dbReference type="HGNC" id="HGNC:1709"/>
    </source>
</evidence>
<evidence type="ECO:0007829" key="26">
    <source>
        <dbReference type="PDB" id="6K4J"/>
    </source>
</evidence>
<evidence type="ECO:0007829" key="27">
    <source>
        <dbReference type="PDB" id="6Z1V"/>
    </source>
</evidence>
<gene>
    <name evidence="19 25" type="primary">CD9</name>
    <name type="synonym">MIC3</name>
    <name type="synonym">TSPAN29</name>
    <name evidence="22" type="ORF">GIG2</name>
</gene>
<sequence length="228" mass="25416">MPVKGGTKCIKYLLFGFNFIFWLAGIAVLAIGLWLRFDSQTKSIFEQETNNNNSSFYTGVYILIGAGALMMLVGFLGCCGAVQESQCMLGLFFGFLLVIFAIEIAAAIWGYSHKDEVIKEVQEFYKDTYNKLKTKDEPQRETLKAIHYALNCCGLAGGVEQFISDICPKKDVLETFTVKSCPDAIKEVFDNKFHIIGAVGIGIAVVMIFGMIFSMILCCAIRRNREMV</sequence>
<reference key="1">
    <citation type="journal article" date="1991" name="J. Biol. Chem.">
        <title>Molecular cloning of the CD9 antigen. A new family of cell surface proteins.</title>
        <authorList>
            <person name="Boucheix C."/>
            <person name="Benoit P."/>
            <person name="Frachet P."/>
            <person name="Billard M."/>
            <person name="Worthington R.E."/>
            <person name="Gagnon J."/>
            <person name="Uzan G."/>
        </authorList>
    </citation>
    <scope>NUCLEOTIDE SEQUENCE [MRNA]</scope>
    <scope>PROTEIN SEQUENCE OF 2-5</scope>
</reference>
<reference key="2">
    <citation type="journal article" date="1991" name="J. Biol. Chem.">
        <title>cDNA cloning and expression of platelet p24/CD9. Evidence for a new family of multiple membrane-spanning proteins.</title>
        <authorList>
            <person name="Lanza F."/>
            <person name="Wolf D."/>
            <person name="Fox C.F."/>
            <person name="Kieffer N."/>
            <person name="Seyer J.M."/>
            <person name="Fried V.A."/>
            <person name="Coughlin S.R."/>
            <person name="Phillips D.R."/>
            <person name="Jennings L.K."/>
        </authorList>
    </citation>
    <scope>NUCLEOTIDE SEQUENCE [MRNA]</scope>
    <scope>PARTIAL PROTEIN SEQUENCE</scope>
</reference>
<reference key="3">
    <citation type="journal article" date="1991" name="J. Exp. Med.">
        <title>Identification of the motility-related protein (MRP-1), recognized by monoclonal antibody M31-15, which inhibits cell motility.</title>
        <authorList>
            <person name="Miyake M."/>
            <person name="Koyama M."/>
            <person name="Seno M."/>
            <person name="Ikeyama S."/>
        </authorList>
    </citation>
    <scope>NUCLEOTIDE SEQUENCE [MRNA]</scope>
</reference>
<reference key="4">
    <citation type="journal article" date="1993" name="Genomics">
        <title>Organization of the human CD9 gene.</title>
        <authorList>
            <person name="Rubinstein E."/>
            <person name="Benoit P."/>
            <person name="Billard M."/>
            <person name="Plaisance S."/>
            <person name="Prenant M."/>
            <person name="Uzan G."/>
            <person name="Boucheix C."/>
        </authorList>
    </citation>
    <scope>NUCLEOTIDE SEQUENCE [GENOMIC DNA]</scope>
    <source>
        <tissue>Leukocyte</tissue>
    </source>
</reference>
<reference key="5">
    <citation type="journal article" date="2004" name="Clin. Exp. Immunol.">
        <title>The tetraspanin CD9 is preferentially expressed on the human CD4(+)CD45RA+ naive T cell population and is involved in T cell activation.</title>
        <authorList>
            <person name="Kobayashi H."/>
            <person name="Hosono O."/>
            <person name="Iwata S."/>
            <person name="Kawasaki H."/>
            <person name="Kuwana M."/>
            <person name="Tanaka H."/>
            <person name="Dang N.H."/>
            <person name="Morimoto C."/>
        </authorList>
    </citation>
    <scope>NUCLEOTIDE SEQUENCE [MRNA]</scope>
</reference>
<reference key="6">
    <citation type="submission" date="2003-09" db="EMBL/GenBank/DDBJ databases">
        <title>Identification of a human growth inhibition gene 2 (GIG2).</title>
        <authorList>
            <person name="Kim J.W."/>
        </authorList>
    </citation>
    <scope>NUCLEOTIDE SEQUENCE [LARGE SCALE MRNA]</scope>
</reference>
<reference key="7">
    <citation type="submission" date="2003-09" db="EMBL/GenBank/DDBJ databases">
        <authorList>
            <consortium name="SeattleSNPs variation discovery resource"/>
        </authorList>
    </citation>
    <scope>NUCLEOTIDE SEQUENCE [GENOMIC DNA]</scope>
</reference>
<reference key="8">
    <citation type="submission" date="2005-09" db="EMBL/GenBank/DDBJ databases">
        <authorList>
            <person name="Mural R.J."/>
            <person name="Istrail S."/>
            <person name="Sutton G.G."/>
            <person name="Florea L."/>
            <person name="Halpern A.L."/>
            <person name="Mobarry C.M."/>
            <person name="Lippert R."/>
            <person name="Walenz B."/>
            <person name="Shatkay H."/>
            <person name="Dew I."/>
            <person name="Miller J.R."/>
            <person name="Flanigan M.J."/>
            <person name="Edwards N.J."/>
            <person name="Bolanos R."/>
            <person name="Fasulo D."/>
            <person name="Halldorsson B.V."/>
            <person name="Hannenhalli S."/>
            <person name="Turner R."/>
            <person name="Yooseph S."/>
            <person name="Lu F."/>
            <person name="Nusskern D.R."/>
            <person name="Shue B.C."/>
            <person name="Zheng X.H."/>
            <person name="Zhong F."/>
            <person name="Delcher A.L."/>
            <person name="Huson D.H."/>
            <person name="Kravitz S.A."/>
            <person name="Mouchard L."/>
            <person name="Reinert K."/>
            <person name="Remington K.A."/>
            <person name="Clark A.G."/>
            <person name="Waterman M.S."/>
            <person name="Eichler E.E."/>
            <person name="Adams M.D."/>
            <person name="Hunkapiller M.W."/>
            <person name="Myers E.W."/>
            <person name="Venter J.C."/>
        </authorList>
    </citation>
    <scope>NUCLEOTIDE SEQUENCE [LARGE SCALE GENOMIC DNA]</scope>
</reference>
<reference key="9">
    <citation type="journal article" date="2004" name="Genome Res.">
        <title>The status, quality, and expansion of the NIH full-length cDNA project: the Mammalian Gene Collection (MGC).</title>
        <authorList>
            <consortium name="The MGC Project Team"/>
        </authorList>
    </citation>
    <scope>NUCLEOTIDE SEQUENCE [LARGE SCALE MRNA]</scope>
    <source>
        <tissue>Ovary</tissue>
    </source>
</reference>
<reference key="10">
    <citation type="journal article" date="1990" name="FEBS Lett.">
        <title>Purification and partial characterization of CD9 antigen of human platelets.</title>
        <authorList>
            <person name="Higashihara M."/>
            <person name="Takahata K."/>
            <person name="Yatomi Y."/>
            <person name="Nakahara K."/>
            <person name="Kurokawa K."/>
        </authorList>
    </citation>
    <scope>PROTEIN SEQUENCE OF 2-21</scope>
    <source>
        <tissue>Platelet</tissue>
    </source>
</reference>
<reference key="11">
    <citation type="journal article" date="1993" name="J. Exp. Med.">
        <title>Suppression of cell motility and metastasis by transfection with human motility-related protein (MRP-1/CD9) DNA.</title>
        <authorList>
            <person name="Ikeyama S."/>
            <person name="Koyama M."/>
            <person name="Yamaoko M."/>
            <person name="Sasada R."/>
            <person name="Miyake M."/>
        </authorList>
    </citation>
    <scope>FUNCTION IN CELL MOTILITY AND METASTASIS</scope>
</reference>
<reference key="12">
    <citation type="journal article" date="1994" name="J. Immunol.">
        <title>CD9-regulated adhesion. Anti-CD9 monoclonal antibody induce pre-B cell adhesion to bone marrow fibroblasts through de novo recognition of fibronectin.</title>
        <authorList>
            <person name="Masellis-Smith A."/>
            <person name="Shaw A.R."/>
        </authorList>
    </citation>
    <scope>FUNCTION IN CELL ADHESION</scope>
</reference>
<reference key="13">
    <citation type="journal article" date="2003" name="Biochem. Biophys. Res. Commun.">
        <title>Structural requirements for the inhibitory action of the CD9 large extracellular domain in sperm/oocyte binding and fusion.</title>
        <authorList>
            <person name="Higginbottom A."/>
            <person name="Takahashi Y."/>
            <person name="Bolling L."/>
            <person name="Coonrod S.A."/>
            <person name="White J.M."/>
            <person name="Partridge L.J."/>
            <person name="Monk P.N."/>
        </authorList>
    </citation>
    <scope>FUNCTION IN SPERM-EGG FUSION</scope>
</reference>
<reference key="14">
    <citation type="journal article" date="2003" name="J. Cell Biol.">
        <title>Tetraspanins CD9 and CD81 function to prevent the fusion of mononuclear phagocytes.</title>
        <authorList>
            <person name="Takeda Y."/>
            <person name="Tachibana I."/>
            <person name="Miyado K."/>
            <person name="Kobayashi M."/>
            <person name="Miyazaki T."/>
            <person name="Funakoshi T."/>
            <person name="Kimura H."/>
            <person name="Yamane H."/>
            <person name="Saito Y."/>
            <person name="Goto H."/>
            <person name="Yoneda T."/>
            <person name="Yoshida M."/>
            <person name="Kumagai T."/>
            <person name="Osaki T."/>
            <person name="Hayashi S."/>
            <person name="Kawase I."/>
            <person name="Mekada E."/>
        </authorList>
    </citation>
    <scope>FUNCTION</scope>
    <scope>INTERACTION WITH CD81</scope>
</reference>
<reference key="15">
    <citation type="journal article" date="2004" name="Biochem. J.">
        <title>Evidence for specific tetraspanin homodimers: inhibition of palmitoylation makes cysteine residues available for cross-linking.</title>
        <authorList>
            <person name="Kovalenko O.V."/>
            <person name="Yang X."/>
            <person name="Kolesnikova T.V."/>
            <person name="Hemler M.E."/>
        </authorList>
    </citation>
    <scope>SUBUNIT</scope>
</reference>
<reference key="16">
    <citation type="journal article" date="2002" name="FEBS Lett.">
        <title>Differential stability of tetraspanin/tetraspanin interactions: role of palmitoylation.</title>
        <authorList>
            <person name="Charrin S."/>
            <person name="Manie S."/>
            <person name="Oualid M."/>
            <person name="Billard M."/>
            <person name="Boucheix C."/>
            <person name="Rubinstein E."/>
        </authorList>
    </citation>
    <scope>PALMITOYLATION AT CYS-9; CYS-78; CYS-79; CYS-87; CYS-218 AND CYS-219</scope>
    <scope>MUTAGENESIS OF CYS-9; CYS-78; CYS-79; CYS-87; CYS-218 AND CYS-219</scope>
</reference>
<reference key="17">
    <citation type="journal article" date="2001" name="J. Biol. Chem.">
        <title>The major CD9 and CD81 molecular partner. Identification and characterization of the complexes.</title>
        <authorList>
            <person name="Charrin S."/>
            <person name="Le Naour F."/>
            <person name="Oualid M."/>
            <person name="Billard M."/>
            <person name="Faure G."/>
            <person name="Hanash S.M."/>
            <person name="Boucheix C."/>
            <person name="Rubinstein E."/>
        </authorList>
    </citation>
    <scope>INTERACTION WITH PTGFRN</scope>
</reference>
<reference key="18">
    <citation type="journal article" date="2001" name="J. Biol. Chem.">
        <title>EWI-2 is a major CD9 and CD81 partner and member of a novel Ig protein subfamily.</title>
        <authorList>
            <person name="Stipp C.S."/>
            <person name="Kolesnikova T.V."/>
            <person name="Hemler M.E."/>
        </authorList>
    </citation>
    <scope>INTERACTION WITH IGSF8</scope>
</reference>
<reference key="19">
    <citation type="journal article" date="2008" name="Blood">
        <title>Tetraspanin family member CD9 inhibits Aggrus/podoplanin-induced platelet aggregation and suppresses pulmonary metastasis.</title>
        <authorList>
            <person name="Nakazawa Y."/>
            <person name="Sato S."/>
            <person name="Naito M."/>
            <person name="Kato Y."/>
            <person name="Mishima K."/>
            <person name="Arai H."/>
            <person name="Tsuruo T."/>
            <person name="Fujita N."/>
        </authorList>
    </citation>
    <scope>FUNCTION</scope>
    <scope>INTERACTION WITH PDPN</scope>
</reference>
<reference key="20">
    <citation type="journal article" date="2008" name="Mol. Biol. Cell">
        <title>DHHC2 affects palmitoylation, stability, and functions of tetraspanins CD9 and CD151.</title>
        <authorList>
            <person name="Sharma C."/>
            <person name="Yang X.H."/>
            <person name="Hemler M.E."/>
        </authorList>
    </citation>
    <scope>PALMITOYLATION</scope>
</reference>
<reference key="21">
    <citation type="journal article" date="2010" name="Thromb. Res.">
        <title>Palmitoylation supports the association of tetraspanin CD63 with CD9 and integrin alphaIIbbeta3 in activated platelets.</title>
        <authorList>
            <person name="Israels S.J."/>
            <person name="McMillan-Ward E.M."/>
        </authorList>
    </citation>
    <scope>PALMITOYLATION</scope>
    <scope>SUBCELLULAR LOCATION</scope>
    <scope>TISSUE SPECIFICITY</scope>
    <scope>INTERACTION WITH CD63</scope>
    <scope>IDENTIFICATION IN A COMPLEX WITH ITGB3 AND CD63</scope>
</reference>
<reference key="22">
    <citation type="journal article" date="2011" name="BMC Syst. Biol.">
        <title>Initial characterization of the human central proteome.</title>
        <authorList>
            <person name="Burkard T.R."/>
            <person name="Planyavsky M."/>
            <person name="Kaupe I."/>
            <person name="Breitwieser F.P."/>
            <person name="Buerckstuemmer T."/>
            <person name="Bennett K.L."/>
            <person name="Superti-Furga G."/>
            <person name="Colinge J."/>
        </authorList>
    </citation>
    <scope>IDENTIFICATION BY MASS SPECTROMETRY [LARGE SCALE ANALYSIS]</scope>
</reference>
<reference key="23">
    <citation type="journal article" date="2013" name="Mol. Cell. Biol.">
        <title>CD81 controls sustained T cell activation signaling and defines the maturation stages of cognate immunological synapses.</title>
        <authorList>
            <person name="Rocha-Perugini V."/>
            <person name="Zamai M."/>
            <person name="Gonzalez-Granado J.M."/>
            <person name="Barreiro O."/>
            <person name="Tejera E."/>
            <person name="Yanez-Mo M."/>
            <person name="Caiolfa V.R."/>
            <person name="Sanchez-Madrid F."/>
        </authorList>
    </citation>
    <scope>INTERACTION WITH CD81</scope>
</reference>
<reference key="24">
    <citation type="journal article" date="2014" name="PLoS ONE">
        <title>Distinct regions of the large extracellular domain of tetraspanin CD9 are involved in the control of human multinucleated giant cell formation.</title>
        <authorList>
            <person name="Hulme R.S."/>
            <person name="Higginbottom A."/>
            <person name="Palmer J."/>
            <person name="Partridge L.J."/>
            <person name="Monk P.N."/>
        </authorList>
    </citation>
    <scope>DISULFIDE BONDS</scope>
</reference>
<reference key="25">
    <citation type="journal article" date="2017" name="Biochem. J.">
        <title>The CD9, CD81, and CD151 EC2 domains bind to the classical RGD-binding site of integrin alphavbeta3.</title>
        <authorList>
            <person name="Yu J."/>
            <person name="Lee C.Y."/>
            <person name="Changou C.A."/>
            <person name="Cedano-Prieto D.M."/>
            <person name="Takada Y.K."/>
            <person name="Takada Y."/>
        </authorList>
    </citation>
    <scope>INTERACTION WITH INTEGRIN ITGAV:ITGB3</scope>
</reference>
<feature type="initiator methionine" description="Removed" evidence="9 13">
    <location>
        <position position="1"/>
    </location>
</feature>
<feature type="chain" id="PRO_0000219205" description="CD9 antigen">
    <location>
        <begin position="2"/>
        <end position="228"/>
    </location>
</feature>
<feature type="topological domain" description="Cytoplasmic" evidence="2">
    <location>
        <begin position="2"/>
        <end position="12"/>
    </location>
</feature>
<feature type="transmembrane region" description="Helical" evidence="2">
    <location>
        <begin position="13"/>
        <end position="33"/>
    </location>
</feature>
<feature type="topological domain" description="Extracellular" evidence="2">
    <location>
        <begin position="34"/>
        <end position="55"/>
    </location>
</feature>
<feature type="transmembrane region" description="Helical" evidence="2">
    <location>
        <begin position="56"/>
        <end position="76"/>
    </location>
</feature>
<feature type="topological domain" description="Cytoplasmic" evidence="2">
    <location>
        <begin position="77"/>
        <end position="87"/>
    </location>
</feature>
<feature type="transmembrane region" description="Helical" evidence="2">
    <location>
        <begin position="88"/>
        <end position="111"/>
    </location>
</feature>
<feature type="topological domain" description="Extracellular" evidence="2">
    <location>
        <begin position="112"/>
        <end position="195"/>
    </location>
</feature>
<feature type="transmembrane region" description="Helical" evidence="2">
    <location>
        <begin position="196"/>
        <end position="221"/>
    </location>
</feature>
<feature type="topological domain" description="Cytoplasmic" evidence="2">
    <location>
        <begin position="222"/>
        <end position="228"/>
    </location>
</feature>
<feature type="lipid moiety-binding region" description="S-palmitoyl cysteine" evidence="24">
    <location>
        <position position="9"/>
    </location>
</feature>
<feature type="lipid moiety-binding region" description="S-palmitoyl cysteine" evidence="24">
    <location>
        <position position="78"/>
    </location>
</feature>
<feature type="lipid moiety-binding region" description="S-palmitoyl cysteine" evidence="24">
    <location>
        <position position="79"/>
    </location>
</feature>
<feature type="lipid moiety-binding region" description="S-palmitoyl cysteine" evidence="24">
    <location>
        <position position="87"/>
    </location>
</feature>
<feature type="lipid moiety-binding region" description="S-palmitoyl cysteine" evidence="24">
    <location>
        <position position="218"/>
    </location>
</feature>
<feature type="lipid moiety-binding region" description="S-palmitoyl cysteine" evidence="24">
    <location>
        <position position="219"/>
    </location>
</feature>
<feature type="glycosylation site" description="N-linked (GlcNAc...) asparagine" evidence="2">
    <location>
        <position position="52"/>
    </location>
</feature>
<feature type="glycosylation site" description="N-linked (GlcNAc...) asparagine" evidence="2">
    <location>
        <position position="53"/>
    </location>
</feature>
<feature type="disulfide bond" evidence="15">
    <location>
        <begin position="152"/>
        <end position="181"/>
    </location>
</feature>
<feature type="disulfide bond" evidence="15">
    <location>
        <begin position="153"/>
        <end position="167"/>
    </location>
</feature>
<feature type="mutagenesis site" description="Loss of palmitoylation; when associated with A-78; A-79; A-87; A-218 and A-219." evidence="5">
    <original>C</original>
    <variation>A</variation>
    <location>
        <position position="9"/>
    </location>
</feature>
<feature type="mutagenesis site" description="Loss of palmitoylation; when associated with A-9; A-79; A-87; A-218 and A-219." evidence="5">
    <original>C</original>
    <variation>A</variation>
    <location>
        <position position="78"/>
    </location>
</feature>
<feature type="mutagenesis site" description="Loss of palmitoylation; when associated with A-9; A-78; A-87; A-218 and A-219." evidence="5">
    <original>C</original>
    <variation>A</variation>
    <location>
        <position position="79"/>
    </location>
</feature>
<feature type="mutagenesis site" description="Loss of palmitoylation; when associated with A-9; A-78; A-79; A-218 and A-219." evidence="5">
    <original>C</original>
    <variation>A</variation>
    <location>
        <position position="87"/>
    </location>
</feature>
<feature type="mutagenesis site" description="Loss of palmitoylation; when associated with A-9; A-78; A-79; A-87 and A-219." evidence="5">
    <original>C</original>
    <variation>A</variation>
    <location>
        <position position="218"/>
    </location>
</feature>
<feature type="mutagenesis site" description="Loss of palmitoylation; when associated with A-9; A-78; A-79; A-87 and A-218." evidence="5">
    <original>C</original>
    <variation>A</variation>
    <location>
        <position position="219"/>
    </location>
</feature>
<feature type="sequence conflict" description="In Ref. 9; AAH11988." evidence="23" ref="9">
    <original>M</original>
    <variation>T</variation>
    <location>
        <position position="215"/>
    </location>
</feature>
<feature type="helix" evidence="26">
    <location>
        <begin position="5"/>
        <end position="37"/>
    </location>
</feature>
<feature type="helix" evidence="26">
    <location>
        <begin position="41"/>
        <end position="45"/>
    </location>
</feature>
<feature type="helix" evidence="26">
    <location>
        <begin position="55"/>
        <end position="82"/>
    </location>
</feature>
<feature type="helix" evidence="26">
    <location>
        <begin position="86"/>
        <end position="111"/>
    </location>
</feature>
<feature type="helix" evidence="27">
    <location>
        <begin position="114"/>
        <end position="133"/>
    </location>
</feature>
<feature type="helix" evidence="27">
    <location>
        <begin position="137"/>
        <end position="139"/>
    </location>
</feature>
<feature type="helix" evidence="27">
    <location>
        <begin position="140"/>
        <end position="150"/>
    </location>
</feature>
<feature type="turn" evidence="26">
    <location>
        <begin position="154"/>
        <end position="156"/>
    </location>
</feature>
<feature type="helix" evidence="27">
    <location>
        <begin position="161"/>
        <end position="166"/>
    </location>
</feature>
<feature type="turn" evidence="27">
    <location>
        <begin position="169"/>
        <end position="172"/>
    </location>
</feature>
<feature type="helix" evidence="27">
    <location>
        <begin position="173"/>
        <end position="175"/>
    </location>
</feature>
<feature type="helix" evidence="27">
    <location>
        <begin position="181"/>
        <end position="190"/>
    </location>
</feature>
<feature type="helix" evidence="26">
    <location>
        <begin position="193"/>
        <end position="222"/>
    </location>
</feature>
<name>CD9_HUMAN</name>